<accession>A8G6C6</accession>
<sequence>MTQLFYDTDADLSLLNNKTIAIIGYGSQGHAHALNLKDSGMDVIVGLYKGSKSESKAVSDGLQVFSVSEACEKADWIMILLPDEFQKDVYLKEIEPNLKEGKILSFAHGFNIRFGLIKPPSFVDVVMIAPKGPGHTVRWEYQNGQGVPALFAVEQDSSGSARSLAMAYAKGIGGTRAGILETNFKEETETDLFGEQAVLCGGLSELVKSGFETLVEAGYQPELAYFECLHEVKLIVDLMVKGGLSQMRDSISNTAEYGDYVSGKRLINSDTKKEMQKILKDIQDGTFAKNFVEECDKNKPLMTKLREENSKHEIEKVGKGLRSMFSWLK</sequence>
<name>ILVC_PROM2</name>
<keyword id="KW-0028">Amino-acid biosynthesis</keyword>
<keyword id="KW-0100">Branched-chain amino acid biosynthesis</keyword>
<keyword id="KW-0460">Magnesium</keyword>
<keyword id="KW-0479">Metal-binding</keyword>
<keyword id="KW-0521">NADP</keyword>
<keyword id="KW-0560">Oxidoreductase</keyword>
<gene>
    <name evidence="1" type="primary">ilvC</name>
    <name type="ordered locus">P9215_15441</name>
</gene>
<comment type="function">
    <text evidence="1">Involved in the biosynthesis of branched-chain amino acids (BCAA). Catalyzes an alkyl-migration followed by a ketol-acid reduction of (S)-2-acetolactate (S2AL) to yield (R)-2,3-dihydroxy-isovalerate. In the isomerase reaction, S2AL is rearranged via a Mg-dependent methyl migration to produce 3-hydroxy-3-methyl-2-ketobutyrate (HMKB). In the reductase reaction, this 2-ketoacid undergoes a metal-dependent reduction by NADPH to yield (R)-2,3-dihydroxy-isovalerate.</text>
</comment>
<comment type="catalytic activity">
    <reaction evidence="1">
        <text>(2R)-2,3-dihydroxy-3-methylbutanoate + NADP(+) = (2S)-2-acetolactate + NADPH + H(+)</text>
        <dbReference type="Rhea" id="RHEA:22068"/>
        <dbReference type="ChEBI" id="CHEBI:15378"/>
        <dbReference type="ChEBI" id="CHEBI:49072"/>
        <dbReference type="ChEBI" id="CHEBI:57783"/>
        <dbReference type="ChEBI" id="CHEBI:58349"/>
        <dbReference type="ChEBI" id="CHEBI:58476"/>
        <dbReference type="EC" id="1.1.1.86"/>
    </reaction>
</comment>
<comment type="catalytic activity">
    <reaction evidence="1">
        <text>(2R,3R)-2,3-dihydroxy-3-methylpentanoate + NADP(+) = (S)-2-ethyl-2-hydroxy-3-oxobutanoate + NADPH + H(+)</text>
        <dbReference type="Rhea" id="RHEA:13493"/>
        <dbReference type="ChEBI" id="CHEBI:15378"/>
        <dbReference type="ChEBI" id="CHEBI:49256"/>
        <dbReference type="ChEBI" id="CHEBI:49258"/>
        <dbReference type="ChEBI" id="CHEBI:57783"/>
        <dbReference type="ChEBI" id="CHEBI:58349"/>
        <dbReference type="EC" id="1.1.1.86"/>
    </reaction>
</comment>
<comment type="cofactor">
    <cofactor evidence="1">
        <name>Mg(2+)</name>
        <dbReference type="ChEBI" id="CHEBI:18420"/>
    </cofactor>
    <text evidence="1">Binds 2 magnesium ions per subunit.</text>
</comment>
<comment type="pathway">
    <text evidence="1">Amino-acid biosynthesis; L-isoleucine biosynthesis; L-isoleucine from 2-oxobutanoate: step 2/4.</text>
</comment>
<comment type="pathway">
    <text evidence="1">Amino-acid biosynthesis; L-valine biosynthesis; L-valine from pyruvate: step 2/4.</text>
</comment>
<comment type="similarity">
    <text evidence="1">Belongs to the ketol-acid reductoisomerase family.</text>
</comment>
<evidence type="ECO:0000255" key="1">
    <source>
        <dbReference type="HAMAP-Rule" id="MF_00435"/>
    </source>
</evidence>
<evidence type="ECO:0000255" key="2">
    <source>
        <dbReference type="PROSITE-ProRule" id="PRU01197"/>
    </source>
</evidence>
<evidence type="ECO:0000255" key="3">
    <source>
        <dbReference type="PROSITE-ProRule" id="PRU01198"/>
    </source>
</evidence>
<reference key="1">
    <citation type="journal article" date="2007" name="PLoS Genet.">
        <title>Patterns and implications of gene gain and loss in the evolution of Prochlorococcus.</title>
        <authorList>
            <person name="Kettler G.C."/>
            <person name="Martiny A.C."/>
            <person name="Huang K."/>
            <person name="Zucker J."/>
            <person name="Coleman M.L."/>
            <person name="Rodrigue S."/>
            <person name="Chen F."/>
            <person name="Lapidus A."/>
            <person name="Ferriera S."/>
            <person name="Johnson J."/>
            <person name="Steglich C."/>
            <person name="Church G.M."/>
            <person name="Richardson P."/>
            <person name="Chisholm S.W."/>
        </authorList>
    </citation>
    <scope>NUCLEOTIDE SEQUENCE [LARGE SCALE GENOMIC DNA]</scope>
    <source>
        <strain>MIT 9215</strain>
    </source>
</reference>
<protein>
    <recommendedName>
        <fullName evidence="1">Ketol-acid reductoisomerase (NADP(+))</fullName>
        <shortName evidence="1">KARI</shortName>
        <ecNumber evidence="1">1.1.1.86</ecNumber>
    </recommendedName>
    <alternativeName>
        <fullName evidence="1">Acetohydroxy-acid isomeroreductase</fullName>
        <shortName evidence="1">AHIR</shortName>
    </alternativeName>
    <alternativeName>
        <fullName evidence="1">Alpha-keto-beta-hydroxylacyl reductoisomerase</fullName>
    </alternativeName>
    <alternativeName>
        <fullName evidence="1">Ketol-acid reductoisomerase type 1</fullName>
    </alternativeName>
    <alternativeName>
        <fullName evidence="1">Ketol-acid reductoisomerase type I</fullName>
    </alternativeName>
</protein>
<dbReference type="EC" id="1.1.1.86" evidence="1"/>
<dbReference type="EMBL" id="CP000825">
    <property type="protein sequence ID" value="ABV51157.1"/>
    <property type="molecule type" value="Genomic_DNA"/>
</dbReference>
<dbReference type="RefSeq" id="WP_012008202.1">
    <property type="nucleotide sequence ID" value="NC_009840.1"/>
</dbReference>
<dbReference type="SMR" id="A8G6C6"/>
<dbReference type="STRING" id="93060.P9215_15441"/>
<dbReference type="KEGG" id="pmh:P9215_15441"/>
<dbReference type="eggNOG" id="COG0059">
    <property type="taxonomic scope" value="Bacteria"/>
</dbReference>
<dbReference type="HOGENOM" id="CLU_033821_0_1_3"/>
<dbReference type="OrthoDB" id="9804088at2"/>
<dbReference type="UniPathway" id="UPA00047">
    <property type="reaction ID" value="UER00056"/>
</dbReference>
<dbReference type="UniPathway" id="UPA00049">
    <property type="reaction ID" value="UER00060"/>
</dbReference>
<dbReference type="Proteomes" id="UP000002014">
    <property type="component" value="Chromosome"/>
</dbReference>
<dbReference type="GO" id="GO:0005829">
    <property type="term" value="C:cytosol"/>
    <property type="evidence" value="ECO:0007669"/>
    <property type="project" value="TreeGrafter"/>
</dbReference>
<dbReference type="GO" id="GO:0004455">
    <property type="term" value="F:ketol-acid reductoisomerase activity"/>
    <property type="evidence" value="ECO:0007669"/>
    <property type="project" value="UniProtKB-UniRule"/>
</dbReference>
<dbReference type="GO" id="GO:0000287">
    <property type="term" value="F:magnesium ion binding"/>
    <property type="evidence" value="ECO:0007669"/>
    <property type="project" value="UniProtKB-UniRule"/>
</dbReference>
<dbReference type="GO" id="GO:0050661">
    <property type="term" value="F:NADP binding"/>
    <property type="evidence" value="ECO:0007669"/>
    <property type="project" value="InterPro"/>
</dbReference>
<dbReference type="GO" id="GO:0009097">
    <property type="term" value="P:isoleucine biosynthetic process"/>
    <property type="evidence" value="ECO:0007669"/>
    <property type="project" value="UniProtKB-UniRule"/>
</dbReference>
<dbReference type="GO" id="GO:0009099">
    <property type="term" value="P:L-valine biosynthetic process"/>
    <property type="evidence" value="ECO:0007669"/>
    <property type="project" value="UniProtKB-UniRule"/>
</dbReference>
<dbReference type="FunFam" id="3.40.50.720:FF:000023">
    <property type="entry name" value="Ketol-acid reductoisomerase (NADP(+))"/>
    <property type="match status" value="1"/>
</dbReference>
<dbReference type="Gene3D" id="6.10.240.10">
    <property type="match status" value="1"/>
</dbReference>
<dbReference type="Gene3D" id="3.40.50.720">
    <property type="entry name" value="NAD(P)-binding Rossmann-like Domain"/>
    <property type="match status" value="1"/>
</dbReference>
<dbReference type="HAMAP" id="MF_00435">
    <property type="entry name" value="IlvC"/>
    <property type="match status" value="1"/>
</dbReference>
<dbReference type="InterPro" id="IPR008927">
    <property type="entry name" value="6-PGluconate_DH-like_C_sf"/>
</dbReference>
<dbReference type="InterPro" id="IPR013023">
    <property type="entry name" value="KARI"/>
</dbReference>
<dbReference type="InterPro" id="IPR000506">
    <property type="entry name" value="KARI_C"/>
</dbReference>
<dbReference type="InterPro" id="IPR013116">
    <property type="entry name" value="KARI_N"/>
</dbReference>
<dbReference type="InterPro" id="IPR014359">
    <property type="entry name" value="KARI_prok"/>
</dbReference>
<dbReference type="InterPro" id="IPR036291">
    <property type="entry name" value="NAD(P)-bd_dom_sf"/>
</dbReference>
<dbReference type="NCBIfam" id="TIGR00465">
    <property type="entry name" value="ilvC"/>
    <property type="match status" value="1"/>
</dbReference>
<dbReference type="NCBIfam" id="NF004017">
    <property type="entry name" value="PRK05479.1"/>
    <property type="match status" value="1"/>
</dbReference>
<dbReference type="NCBIfam" id="NF009940">
    <property type="entry name" value="PRK13403.1"/>
    <property type="match status" value="1"/>
</dbReference>
<dbReference type="PANTHER" id="PTHR21371">
    <property type="entry name" value="KETOL-ACID REDUCTOISOMERASE, MITOCHONDRIAL"/>
    <property type="match status" value="1"/>
</dbReference>
<dbReference type="PANTHER" id="PTHR21371:SF1">
    <property type="entry name" value="KETOL-ACID REDUCTOISOMERASE, MITOCHONDRIAL"/>
    <property type="match status" value="1"/>
</dbReference>
<dbReference type="Pfam" id="PF01450">
    <property type="entry name" value="KARI_C"/>
    <property type="match status" value="1"/>
</dbReference>
<dbReference type="Pfam" id="PF07991">
    <property type="entry name" value="KARI_N"/>
    <property type="match status" value="1"/>
</dbReference>
<dbReference type="PIRSF" id="PIRSF000116">
    <property type="entry name" value="IlvC_gammaproteo"/>
    <property type="match status" value="1"/>
</dbReference>
<dbReference type="SUPFAM" id="SSF48179">
    <property type="entry name" value="6-phosphogluconate dehydrogenase C-terminal domain-like"/>
    <property type="match status" value="1"/>
</dbReference>
<dbReference type="SUPFAM" id="SSF51735">
    <property type="entry name" value="NAD(P)-binding Rossmann-fold domains"/>
    <property type="match status" value="1"/>
</dbReference>
<dbReference type="PROSITE" id="PS51851">
    <property type="entry name" value="KARI_C"/>
    <property type="match status" value="1"/>
</dbReference>
<dbReference type="PROSITE" id="PS51850">
    <property type="entry name" value="KARI_N"/>
    <property type="match status" value="1"/>
</dbReference>
<organism>
    <name type="scientific">Prochlorococcus marinus (strain MIT 9215)</name>
    <dbReference type="NCBI Taxonomy" id="93060"/>
    <lineage>
        <taxon>Bacteria</taxon>
        <taxon>Bacillati</taxon>
        <taxon>Cyanobacteriota</taxon>
        <taxon>Cyanophyceae</taxon>
        <taxon>Synechococcales</taxon>
        <taxon>Prochlorococcaceae</taxon>
        <taxon>Prochlorococcus</taxon>
    </lineage>
</organism>
<feature type="chain" id="PRO_1000060232" description="Ketol-acid reductoisomerase (NADP(+))">
    <location>
        <begin position="1"/>
        <end position="329"/>
    </location>
</feature>
<feature type="domain" description="KARI N-terminal Rossmann" evidence="2">
    <location>
        <begin position="2"/>
        <end position="182"/>
    </location>
</feature>
<feature type="domain" description="KARI C-terminal knotted" evidence="3">
    <location>
        <begin position="183"/>
        <end position="328"/>
    </location>
</feature>
<feature type="active site" evidence="1">
    <location>
        <position position="108"/>
    </location>
</feature>
<feature type="binding site" evidence="1">
    <location>
        <begin position="25"/>
        <end position="28"/>
    </location>
    <ligand>
        <name>NADP(+)</name>
        <dbReference type="ChEBI" id="CHEBI:58349"/>
    </ligand>
</feature>
<feature type="binding site" evidence="1">
    <location>
        <position position="51"/>
    </location>
    <ligand>
        <name>NADP(+)</name>
        <dbReference type="ChEBI" id="CHEBI:58349"/>
    </ligand>
</feature>
<feature type="binding site" evidence="1">
    <location>
        <position position="53"/>
    </location>
    <ligand>
        <name>NADP(+)</name>
        <dbReference type="ChEBI" id="CHEBI:58349"/>
    </ligand>
</feature>
<feature type="binding site" evidence="1">
    <location>
        <begin position="83"/>
        <end position="86"/>
    </location>
    <ligand>
        <name>NADP(+)</name>
        <dbReference type="ChEBI" id="CHEBI:58349"/>
    </ligand>
</feature>
<feature type="binding site" evidence="1">
    <location>
        <position position="134"/>
    </location>
    <ligand>
        <name>NADP(+)</name>
        <dbReference type="ChEBI" id="CHEBI:58349"/>
    </ligand>
</feature>
<feature type="binding site" evidence="1">
    <location>
        <position position="191"/>
    </location>
    <ligand>
        <name>Mg(2+)</name>
        <dbReference type="ChEBI" id="CHEBI:18420"/>
        <label>1</label>
    </ligand>
</feature>
<feature type="binding site" evidence="1">
    <location>
        <position position="191"/>
    </location>
    <ligand>
        <name>Mg(2+)</name>
        <dbReference type="ChEBI" id="CHEBI:18420"/>
        <label>2</label>
    </ligand>
</feature>
<feature type="binding site" evidence="1">
    <location>
        <position position="195"/>
    </location>
    <ligand>
        <name>Mg(2+)</name>
        <dbReference type="ChEBI" id="CHEBI:18420"/>
        <label>1</label>
    </ligand>
</feature>
<feature type="binding site" evidence="1">
    <location>
        <position position="227"/>
    </location>
    <ligand>
        <name>Mg(2+)</name>
        <dbReference type="ChEBI" id="CHEBI:18420"/>
        <label>2</label>
    </ligand>
</feature>
<feature type="binding site" evidence="1">
    <location>
        <position position="231"/>
    </location>
    <ligand>
        <name>Mg(2+)</name>
        <dbReference type="ChEBI" id="CHEBI:18420"/>
        <label>2</label>
    </ligand>
</feature>
<feature type="binding site" evidence="1">
    <location>
        <position position="252"/>
    </location>
    <ligand>
        <name>substrate</name>
    </ligand>
</feature>
<proteinExistence type="inferred from homology"/>